<sequence>MPRRKQQAPKRAAGYAQEEQLKEEEEIKEEEEEEEDSGSVAQLQGSNDPGTDEELETGAEQKGCFSYQNSPGSHLSNQDAENESLLSDASDQVSDIKSVCSRDASDKKASVHPKLPTEAHSCMDKMTAVYANILSDSYWSGLGLGFKLSSSERRHCDTRNGSSKTDFDWHQDALSKSLQQNLPPRSVSKPSLFSSVQLYRQSSKMCGTVFTGASRFRCRQCSAAYDTLVELTVHMNETGHYQDDNRKKDKLRPTSYSKPRKRAFQDMDKEDAQKVLKCMFCGDSFDSLQDLSVHMIKTKHYQKVPLKEPVPTISSKMVTPAKKRVFDVNRPCSPDSTTGSFADPFPAPKNASLQLSSNNRYGYQNGASYTWQFEACKSQILKCMECGSSHDTLQQLTTHMMVTGHFLKVTSSASKKGKQLVLDPLAVEKMQSLSDAPSSDSLAPKPSSNSASDCTASTTELKRESKKEKPEELRTDEKVLKSEDYEDPLQKPLDPAMKYQYLREEDLEDGSKGGGDILKSLENTVTTAINKAQNGAPSWSAYPSIHAAYQLSEGTKPSLPMGSQVLQIRPNLANKLRPIAPKWKVMPLVSVPTSLAPYTQVKKEPEDKEEVAKECGQESPHEEASSFSHSEGDSFPKSEPPAESKKAEPCPLREEDKRMKDGGEKEKAQPVEPVSSLSNGCALAAHAPAPPCVNPLSALQSVLNNHLGKATEPLRSPSCSSPSSSTMAMFHKSSLGVMDKPVLSPASTRPASVSRRYLFENNDQPIDLTKSKSKKAESSQAQSCTSPPQKHALSDIADMVKVLPKATTPKPAASSRVPPVKLEMDVRRFEDVSSEVSTLHKRKGRQSNWNPQHLLILQAQFASSLFQTSEGKYLLSDLGPQERMQISKFTGLSMTTISHWLANVKYQLRKTGGTKFLKNMDKGHPIFYCSDCASQFRTPSTYISHLESHLGFQMKDMTRMAVEQQSQVEQEISRVSSAQRSPETIAGEEDTDSKFKCKLCCRTFVSKHAVKLHLSKTHSKSPEHHAQFVTDVDEE</sequence>
<comment type="function">
    <text evidence="7">Probable transcriptional regulator involved in developmental processes. May act as a transcriptional repressor (Potential).</text>
</comment>
<comment type="subunit">
    <text evidence="1">Interacts (via homeobox domain) with APBB1 (via PID domain 1).</text>
</comment>
<comment type="subcellular location">
    <subcellularLocation>
        <location evidence="7">Nucleus</location>
    </subcellularLocation>
</comment>
<comment type="PTM">
    <text evidence="1">Sumoylated.</text>
</comment>
<comment type="similarity">
    <text evidence="7">Belongs to the teashirt C2H2-type zinc-finger protein family.</text>
</comment>
<proteinExistence type="inferred from homology"/>
<reference key="1">
    <citation type="submission" date="2007-05" db="EMBL/GenBank/DDBJ databases">
        <authorList>
            <consortium name="Porcine genome sequencing project"/>
        </authorList>
    </citation>
    <scope>NUCLEOTIDE SEQUENCE [LARGE SCALE GENOMIC DNA]</scope>
</reference>
<protein>
    <recommendedName>
        <fullName>Teashirt homolog 2</fullName>
    </recommendedName>
</protein>
<evidence type="ECO:0000250" key="1"/>
<evidence type="ECO:0000250" key="2">
    <source>
        <dbReference type="UniProtKB" id="Q68FE9"/>
    </source>
</evidence>
<evidence type="ECO:0000250" key="3">
    <source>
        <dbReference type="UniProtKB" id="Q9NRE2"/>
    </source>
</evidence>
<evidence type="ECO:0000255" key="4"/>
<evidence type="ECO:0000255" key="5">
    <source>
        <dbReference type="PROSITE-ProRule" id="PRU00042"/>
    </source>
</evidence>
<evidence type="ECO:0000256" key="6">
    <source>
        <dbReference type="SAM" id="MobiDB-lite"/>
    </source>
</evidence>
<evidence type="ECO:0000305" key="7"/>
<feature type="chain" id="PRO_0000296391" description="Teashirt homolog 2">
    <location>
        <begin position="1"/>
        <end position="1035"/>
    </location>
</feature>
<feature type="zinc finger region" description="C2H2-type 1" evidence="5">
    <location>
        <begin position="216"/>
        <end position="240"/>
    </location>
</feature>
<feature type="zinc finger region" description="C2H2-type 2" evidence="5">
    <location>
        <begin position="276"/>
        <end position="300"/>
    </location>
</feature>
<feature type="zinc finger region" description="C2H2-type 3; atypical" evidence="5">
    <location>
        <begin position="381"/>
        <end position="405"/>
    </location>
</feature>
<feature type="DNA-binding region" description="Homeobox">
    <location>
        <begin position="842"/>
        <end position="912"/>
    </location>
</feature>
<feature type="zinc finger region" description="C2H2-type 4" evidence="5">
    <location>
        <begin position="927"/>
        <end position="949"/>
    </location>
</feature>
<feature type="zinc finger region" description="C2H2-type 5" evidence="5">
    <location>
        <begin position="995"/>
        <end position="1018"/>
    </location>
</feature>
<feature type="region of interest" description="Disordered" evidence="6">
    <location>
        <begin position="1"/>
        <end position="92"/>
    </location>
</feature>
<feature type="region of interest" description="Disordered" evidence="6">
    <location>
        <begin position="240"/>
        <end position="266"/>
    </location>
</feature>
<feature type="region of interest" description="Disordered" evidence="6">
    <location>
        <begin position="432"/>
        <end position="496"/>
    </location>
</feature>
<feature type="region of interest" description="Disordered" evidence="6">
    <location>
        <begin position="600"/>
        <end position="674"/>
    </location>
</feature>
<feature type="region of interest" description="Disordered" evidence="6">
    <location>
        <begin position="764"/>
        <end position="791"/>
    </location>
</feature>
<feature type="region of interest" description="Disordered" evidence="6">
    <location>
        <begin position="968"/>
        <end position="987"/>
    </location>
</feature>
<feature type="region of interest" description="Disordered" evidence="6">
    <location>
        <begin position="1015"/>
        <end position="1035"/>
    </location>
</feature>
<feature type="coiled-coil region" evidence="4">
    <location>
        <begin position="13"/>
        <end position="42"/>
    </location>
</feature>
<feature type="compositionally biased region" description="Acidic residues" evidence="6">
    <location>
        <begin position="21"/>
        <end position="37"/>
    </location>
</feature>
<feature type="compositionally biased region" description="Polar residues" evidence="6">
    <location>
        <begin position="39"/>
        <end position="49"/>
    </location>
</feature>
<feature type="compositionally biased region" description="Polar residues" evidence="6">
    <location>
        <begin position="66"/>
        <end position="92"/>
    </location>
</feature>
<feature type="compositionally biased region" description="Low complexity" evidence="6">
    <location>
        <begin position="432"/>
        <end position="450"/>
    </location>
</feature>
<feature type="compositionally biased region" description="Basic and acidic residues" evidence="6">
    <location>
        <begin position="460"/>
        <end position="483"/>
    </location>
</feature>
<feature type="compositionally biased region" description="Basic and acidic residues" evidence="6">
    <location>
        <begin position="601"/>
        <end position="669"/>
    </location>
</feature>
<feature type="compositionally biased region" description="Low complexity" evidence="6">
    <location>
        <begin position="968"/>
        <end position="977"/>
    </location>
</feature>
<feature type="modified residue" description="Phosphoserine" evidence="2">
    <location>
        <position position="981"/>
    </location>
</feature>
<feature type="cross-link" description="Glycyl lysine isopeptide (Lys-Gly) (interchain with G-Cter in SUMO2)" evidence="3">
    <location>
        <position position="189"/>
    </location>
</feature>
<feature type="cross-link" description="Glycyl lysine isopeptide (Lys-Gly) (interchain with G-Cter in SUMO2)" evidence="3">
    <location>
        <position position="307"/>
    </location>
</feature>
<feature type="cross-link" description="Glycyl lysine isopeptide (Lys-Gly) (interchain with G-Cter in SUMO2)" evidence="3">
    <location>
        <position position="316"/>
    </location>
</feature>
<feature type="cross-link" description="Glycyl lysine isopeptide (Lys-Gly) (interchain with G-Cter in SUMO2)" evidence="3">
    <location>
        <position position="418"/>
    </location>
</feature>
<feature type="cross-link" description="Glycyl lysine isopeptide (Lys-Gly) (interchain with G-Cter in SUMO2)" evidence="3">
    <location>
        <position position="462"/>
    </location>
</feature>
<feature type="cross-link" description="Glycyl lysine isopeptide (Lys-Gly) (interchain with G-Cter in SUMO2)" evidence="3">
    <location>
        <position position="481"/>
    </location>
</feature>
<feature type="cross-link" description="Glycyl lysine isopeptide (Lys-Gly) (interchain with G-Cter in SUMO2)" evidence="3">
    <location>
        <position position="498"/>
    </location>
</feature>
<feature type="cross-link" description="Glycyl lysine isopeptide (Lys-Gly) (interchain with G-Cter in SUMO2)" evidence="3">
    <location>
        <position position="602"/>
    </location>
</feature>
<feature type="cross-link" description="Glycyl lysine isopeptide (Lys-Gly) (interchain with G-Cter in SUMO2)" evidence="3">
    <location>
        <position position="801"/>
    </location>
</feature>
<feature type="cross-link" description="Glycyl lysine isopeptide (Lys-Gly) (interchain with G-Cter in SUMO2)" evidence="3">
    <location>
        <position position="821"/>
    </location>
</feature>
<dbReference type="EMBL" id="CR974445">
    <property type="protein sequence ID" value="CAN13183.1"/>
    <property type="molecule type" value="Genomic_DNA"/>
</dbReference>
<dbReference type="EMBL" id="CR956408">
    <property type="protein sequence ID" value="CAN13183.1"/>
    <property type="status" value="JOINED"/>
    <property type="molecule type" value="Genomic_DNA"/>
</dbReference>
<dbReference type="EMBL" id="CR956408">
    <property type="protein sequence ID" value="CAN13227.1"/>
    <property type="molecule type" value="Genomic_DNA"/>
</dbReference>
<dbReference type="EMBL" id="CR974445">
    <property type="protein sequence ID" value="CAN13227.1"/>
    <property type="status" value="JOINED"/>
    <property type="molecule type" value="Genomic_DNA"/>
</dbReference>
<dbReference type="RefSeq" id="NP_001108146.1">
    <property type="nucleotide sequence ID" value="NM_001114674.1"/>
</dbReference>
<dbReference type="FunCoup" id="A5GFT6">
    <property type="interactions" value="175"/>
</dbReference>
<dbReference type="PaxDb" id="9823-ENSSSCP00000030054"/>
<dbReference type="Ensembl" id="ENSSSCT00030098216.1">
    <property type="protein sequence ID" value="ENSSSCP00030045211.1"/>
    <property type="gene ID" value="ENSSSCG00030070234.1"/>
</dbReference>
<dbReference type="GeneID" id="100136903"/>
<dbReference type="KEGG" id="ssc:100136903"/>
<dbReference type="CTD" id="128553"/>
<dbReference type="eggNOG" id="ENOG502QV71">
    <property type="taxonomic scope" value="Eukaryota"/>
</dbReference>
<dbReference type="InParanoid" id="A5GFT6"/>
<dbReference type="OrthoDB" id="5815793at2759"/>
<dbReference type="TreeFam" id="TF328447"/>
<dbReference type="Proteomes" id="UP000008227">
    <property type="component" value="Unplaced"/>
</dbReference>
<dbReference type="Proteomes" id="UP000314985">
    <property type="component" value="Unplaced"/>
</dbReference>
<dbReference type="Proteomes" id="UP000694570">
    <property type="component" value="Unplaced"/>
</dbReference>
<dbReference type="Proteomes" id="UP000694571">
    <property type="component" value="Unplaced"/>
</dbReference>
<dbReference type="Proteomes" id="UP000694720">
    <property type="component" value="Unplaced"/>
</dbReference>
<dbReference type="Proteomes" id="UP000694722">
    <property type="component" value="Unplaced"/>
</dbReference>
<dbReference type="Proteomes" id="UP000694723">
    <property type="component" value="Unplaced"/>
</dbReference>
<dbReference type="Proteomes" id="UP000694724">
    <property type="component" value="Unplaced"/>
</dbReference>
<dbReference type="Proteomes" id="UP000694725">
    <property type="component" value="Unplaced"/>
</dbReference>
<dbReference type="Proteomes" id="UP000694726">
    <property type="component" value="Unplaced"/>
</dbReference>
<dbReference type="Proteomes" id="UP000694727">
    <property type="component" value="Unplaced"/>
</dbReference>
<dbReference type="Proteomes" id="UP000694728">
    <property type="component" value="Unplaced"/>
</dbReference>
<dbReference type="GO" id="GO:0005634">
    <property type="term" value="C:nucleus"/>
    <property type="evidence" value="ECO:0000318"/>
    <property type="project" value="GO_Central"/>
</dbReference>
<dbReference type="GO" id="GO:0003677">
    <property type="term" value="F:DNA binding"/>
    <property type="evidence" value="ECO:0000318"/>
    <property type="project" value="GO_Central"/>
</dbReference>
<dbReference type="GO" id="GO:0000981">
    <property type="term" value="F:DNA-binding transcription factor activity, RNA polymerase II-specific"/>
    <property type="evidence" value="ECO:0000318"/>
    <property type="project" value="GO_Central"/>
</dbReference>
<dbReference type="GO" id="GO:0008270">
    <property type="term" value="F:zinc ion binding"/>
    <property type="evidence" value="ECO:0007669"/>
    <property type="project" value="UniProtKB-KW"/>
</dbReference>
<dbReference type="GO" id="GO:0006357">
    <property type="term" value="P:regulation of transcription by RNA polymerase II"/>
    <property type="evidence" value="ECO:0000318"/>
    <property type="project" value="GO_Central"/>
</dbReference>
<dbReference type="CDD" id="cd00086">
    <property type="entry name" value="homeodomain"/>
    <property type="match status" value="1"/>
</dbReference>
<dbReference type="Gene3D" id="3.30.160.60">
    <property type="entry name" value="Classic Zinc Finger"/>
    <property type="match status" value="2"/>
</dbReference>
<dbReference type="InterPro" id="IPR001356">
    <property type="entry name" value="HD"/>
</dbReference>
<dbReference type="InterPro" id="IPR027008">
    <property type="entry name" value="Teashirt_fam"/>
</dbReference>
<dbReference type="InterPro" id="IPR013087">
    <property type="entry name" value="Znf_C2H2_type"/>
</dbReference>
<dbReference type="PANTHER" id="PTHR12487:SF3">
    <property type="entry name" value="TEASHIRT HOMOLOG 2"/>
    <property type="match status" value="1"/>
</dbReference>
<dbReference type="PANTHER" id="PTHR12487">
    <property type="entry name" value="TEASHIRT-RELATED"/>
    <property type="match status" value="1"/>
</dbReference>
<dbReference type="SMART" id="SM00389">
    <property type="entry name" value="HOX"/>
    <property type="match status" value="1"/>
</dbReference>
<dbReference type="SMART" id="SM00355">
    <property type="entry name" value="ZnF_C2H2"/>
    <property type="match status" value="5"/>
</dbReference>
<dbReference type="PROSITE" id="PS00028">
    <property type="entry name" value="ZINC_FINGER_C2H2_1"/>
    <property type="match status" value="4"/>
</dbReference>
<dbReference type="PROSITE" id="PS50157">
    <property type="entry name" value="ZINC_FINGER_C2H2_2"/>
    <property type="match status" value="3"/>
</dbReference>
<keyword id="KW-0175">Coiled coil</keyword>
<keyword id="KW-0217">Developmental protein</keyword>
<keyword id="KW-0238">DNA-binding</keyword>
<keyword id="KW-0371">Homeobox</keyword>
<keyword id="KW-1017">Isopeptide bond</keyword>
<keyword id="KW-0479">Metal-binding</keyword>
<keyword id="KW-0539">Nucleus</keyword>
<keyword id="KW-0597">Phosphoprotein</keyword>
<keyword id="KW-1185">Reference proteome</keyword>
<keyword id="KW-0677">Repeat</keyword>
<keyword id="KW-0678">Repressor</keyword>
<keyword id="KW-0804">Transcription</keyword>
<keyword id="KW-0805">Transcription regulation</keyword>
<keyword id="KW-0832">Ubl conjugation</keyword>
<keyword id="KW-0862">Zinc</keyword>
<keyword id="KW-0863">Zinc-finger</keyword>
<organism>
    <name type="scientific">Sus scrofa</name>
    <name type="common">Pig</name>
    <dbReference type="NCBI Taxonomy" id="9823"/>
    <lineage>
        <taxon>Eukaryota</taxon>
        <taxon>Metazoa</taxon>
        <taxon>Chordata</taxon>
        <taxon>Craniata</taxon>
        <taxon>Vertebrata</taxon>
        <taxon>Euteleostomi</taxon>
        <taxon>Mammalia</taxon>
        <taxon>Eutheria</taxon>
        <taxon>Laurasiatheria</taxon>
        <taxon>Artiodactyla</taxon>
        <taxon>Suina</taxon>
        <taxon>Suidae</taxon>
        <taxon>Sus</taxon>
    </lineage>
</organism>
<name>TSH2_PIG</name>
<gene>
    <name type="primary">TSHZ2</name>
</gene>
<accession>A5GFT6</accession>